<accession>B6J1S2</accession>
<keyword id="KW-0030">Aminoacyl-tRNA synthetase</keyword>
<keyword id="KW-0067">ATP-binding</keyword>
<keyword id="KW-0963">Cytoplasm</keyword>
<keyword id="KW-0436">Ligase</keyword>
<keyword id="KW-0479">Metal-binding</keyword>
<keyword id="KW-0547">Nucleotide-binding</keyword>
<keyword id="KW-0648">Protein biosynthesis</keyword>
<keyword id="KW-0862">Zinc</keyword>
<dbReference type="EC" id="6.1.1.5" evidence="1"/>
<dbReference type="EMBL" id="CP001019">
    <property type="protein sequence ID" value="ACJ18900.1"/>
    <property type="molecule type" value="Genomic_DNA"/>
</dbReference>
<dbReference type="RefSeq" id="WP_012570344.1">
    <property type="nucleotide sequence ID" value="NC_011527.1"/>
</dbReference>
<dbReference type="SMR" id="B6J1S2"/>
<dbReference type="KEGG" id="cbg:CbuG_1612"/>
<dbReference type="HOGENOM" id="CLU_001493_7_0_6"/>
<dbReference type="GO" id="GO:0005829">
    <property type="term" value="C:cytosol"/>
    <property type="evidence" value="ECO:0007669"/>
    <property type="project" value="TreeGrafter"/>
</dbReference>
<dbReference type="GO" id="GO:0002161">
    <property type="term" value="F:aminoacyl-tRNA deacylase activity"/>
    <property type="evidence" value="ECO:0007669"/>
    <property type="project" value="InterPro"/>
</dbReference>
<dbReference type="GO" id="GO:0005524">
    <property type="term" value="F:ATP binding"/>
    <property type="evidence" value="ECO:0007669"/>
    <property type="project" value="UniProtKB-UniRule"/>
</dbReference>
<dbReference type="GO" id="GO:0004822">
    <property type="term" value="F:isoleucine-tRNA ligase activity"/>
    <property type="evidence" value="ECO:0007669"/>
    <property type="project" value="UniProtKB-UniRule"/>
</dbReference>
<dbReference type="GO" id="GO:0000049">
    <property type="term" value="F:tRNA binding"/>
    <property type="evidence" value="ECO:0007669"/>
    <property type="project" value="InterPro"/>
</dbReference>
<dbReference type="GO" id="GO:0008270">
    <property type="term" value="F:zinc ion binding"/>
    <property type="evidence" value="ECO:0007669"/>
    <property type="project" value="UniProtKB-UniRule"/>
</dbReference>
<dbReference type="GO" id="GO:0006428">
    <property type="term" value="P:isoleucyl-tRNA aminoacylation"/>
    <property type="evidence" value="ECO:0007669"/>
    <property type="project" value="UniProtKB-UniRule"/>
</dbReference>
<dbReference type="CDD" id="cd07960">
    <property type="entry name" value="Anticodon_Ia_Ile_BEm"/>
    <property type="match status" value="1"/>
</dbReference>
<dbReference type="CDD" id="cd00818">
    <property type="entry name" value="IleRS_core"/>
    <property type="match status" value="1"/>
</dbReference>
<dbReference type="FunFam" id="1.10.730.20:FF:000001">
    <property type="entry name" value="Isoleucine--tRNA ligase"/>
    <property type="match status" value="1"/>
</dbReference>
<dbReference type="FunFam" id="3.40.50.620:FF:000042">
    <property type="entry name" value="Isoleucine--tRNA ligase"/>
    <property type="match status" value="1"/>
</dbReference>
<dbReference type="FunFam" id="3.40.50.620:FF:000048">
    <property type="entry name" value="Isoleucine--tRNA ligase"/>
    <property type="match status" value="1"/>
</dbReference>
<dbReference type="FunFam" id="3.90.740.10:FF:000002">
    <property type="entry name" value="Isoleucine--tRNA ligase"/>
    <property type="match status" value="1"/>
</dbReference>
<dbReference type="Gene3D" id="1.10.730.20">
    <property type="match status" value="1"/>
</dbReference>
<dbReference type="Gene3D" id="3.40.50.620">
    <property type="entry name" value="HUPs"/>
    <property type="match status" value="2"/>
</dbReference>
<dbReference type="Gene3D" id="3.90.740.10">
    <property type="entry name" value="Valyl/Leucyl/Isoleucyl-tRNA synthetase, editing domain"/>
    <property type="match status" value="1"/>
</dbReference>
<dbReference type="HAMAP" id="MF_02002">
    <property type="entry name" value="Ile_tRNA_synth_type1"/>
    <property type="match status" value="1"/>
</dbReference>
<dbReference type="InterPro" id="IPR002300">
    <property type="entry name" value="aa-tRNA-synth_Ia"/>
</dbReference>
<dbReference type="InterPro" id="IPR033708">
    <property type="entry name" value="Anticodon_Ile_BEm"/>
</dbReference>
<dbReference type="InterPro" id="IPR002301">
    <property type="entry name" value="Ile-tRNA-ligase"/>
</dbReference>
<dbReference type="InterPro" id="IPR023585">
    <property type="entry name" value="Ile-tRNA-ligase_type1"/>
</dbReference>
<dbReference type="InterPro" id="IPR050081">
    <property type="entry name" value="Ile-tRNA_ligase"/>
</dbReference>
<dbReference type="InterPro" id="IPR013155">
    <property type="entry name" value="M/V/L/I-tRNA-synth_anticd-bd"/>
</dbReference>
<dbReference type="InterPro" id="IPR014729">
    <property type="entry name" value="Rossmann-like_a/b/a_fold"/>
</dbReference>
<dbReference type="InterPro" id="IPR009080">
    <property type="entry name" value="tRNAsynth_Ia_anticodon-bd"/>
</dbReference>
<dbReference type="InterPro" id="IPR009008">
    <property type="entry name" value="Val/Leu/Ile-tRNA-synth_edit"/>
</dbReference>
<dbReference type="InterPro" id="IPR010663">
    <property type="entry name" value="Znf_FPG/IleRS"/>
</dbReference>
<dbReference type="NCBIfam" id="TIGR00392">
    <property type="entry name" value="ileS"/>
    <property type="match status" value="1"/>
</dbReference>
<dbReference type="PANTHER" id="PTHR42765:SF1">
    <property type="entry name" value="ISOLEUCINE--TRNA LIGASE, MITOCHONDRIAL"/>
    <property type="match status" value="1"/>
</dbReference>
<dbReference type="PANTHER" id="PTHR42765">
    <property type="entry name" value="SOLEUCYL-TRNA SYNTHETASE"/>
    <property type="match status" value="1"/>
</dbReference>
<dbReference type="Pfam" id="PF08264">
    <property type="entry name" value="Anticodon_1"/>
    <property type="match status" value="1"/>
</dbReference>
<dbReference type="Pfam" id="PF00133">
    <property type="entry name" value="tRNA-synt_1"/>
    <property type="match status" value="1"/>
</dbReference>
<dbReference type="Pfam" id="PF06827">
    <property type="entry name" value="zf-FPG_IleRS"/>
    <property type="match status" value="1"/>
</dbReference>
<dbReference type="PRINTS" id="PR00984">
    <property type="entry name" value="TRNASYNTHILE"/>
</dbReference>
<dbReference type="SUPFAM" id="SSF47323">
    <property type="entry name" value="Anticodon-binding domain of a subclass of class I aminoacyl-tRNA synthetases"/>
    <property type="match status" value="1"/>
</dbReference>
<dbReference type="SUPFAM" id="SSF52374">
    <property type="entry name" value="Nucleotidylyl transferase"/>
    <property type="match status" value="1"/>
</dbReference>
<dbReference type="SUPFAM" id="SSF50677">
    <property type="entry name" value="ValRS/IleRS/LeuRS editing domain"/>
    <property type="match status" value="1"/>
</dbReference>
<name>SYI_COXB2</name>
<organism>
    <name type="scientific">Coxiella burnetii (strain CbuG_Q212)</name>
    <name type="common">Coxiella burnetii (strain Q212)</name>
    <dbReference type="NCBI Taxonomy" id="434923"/>
    <lineage>
        <taxon>Bacteria</taxon>
        <taxon>Pseudomonadati</taxon>
        <taxon>Pseudomonadota</taxon>
        <taxon>Gammaproteobacteria</taxon>
        <taxon>Legionellales</taxon>
        <taxon>Coxiellaceae</taxon>
        <taxon>Coxiella</taxon>
    </lineage>
</organism>
<comment type="function">
    <text evidence="1">Catalyzes the attachment of isoleucine to tRNA(Ile). As IleRS can inadvertently accommodate and process structurally similar amino acids such as valine, to avoid such errors it has two additional distinct tRNA(Ile)-dependent editing activities. One activity is designated as 'pretransfer' editing and involves the hydrolysis of activated Val-AMP. The other activity is designated 'posttransfer' editing and involves deacylation of mischarged Val-tRNA(Ile).</text>
</comment>
<comment type="catalytic activity">
    <reaction evidence="1">
        <text>tRNA(Ile) + L-isoleucine + ATP = L-isoleucyl-tRNA(Ile) + AMP + diphosphate</text>
        <dbReference type="Rhea" id="RHEA:11060"/>
        <dbReference type="Rhea" id="RHEA-COMP:9666"/>
        <dbReference type="Rhea" id="RHEA-COMP:9695"/>
        <dbReference type="ChEBI" id="CHEBI:30616"/>
        <dbReference type="ChEBI" id="CHEBI:33019"/>
        <dbReference type="ChEBI" id="CHEBI:58045"/>
        <dbReference type="ChEBI" id="CHEBI:78442"/>
        <dbReference type="ChEBI" id="CHEBI:78528"/>
        <dbReference type="ChEBI" id="CHEBI:456215"/>
        <dbReference type="EC" id="6.1.1.5"/>
    </reaction>
</comment>
<comment type="cofactor">
    <cofactor evidence="1">
        <name>Zn(2+)</name>
        <dbReference type="ChEBI" id="CHEBI:29105"/>
    </cofactor>
    <text evidence="1">Binds 1 zinc ion per subunit.</text>
</comment>
<comment type="subunit">
    <text evidence="1">Monomer.</text>
</comment>
<comment type="subcellular location">
    <subcellularLocation>
        <location evidence="1">Cytoplasm</location>
    </subcellularLocation>
</comment>
<comment type="domain">
    <text evidence="1">IleRS has two distinct active sites: one for aminoacylation and one for editing. The misactivated valine is translocated from the active site to the editing site, which sterically excludes the correctly activated isoleucine. The single editing site contains two valyl binding pockets, one specific for each substrate (Val-AMP or Val-tRNA(Ile)).</text>
</comment>
<comment type="similarity">
    <text evidence="1">Belongs to the class-I aminoacyl-tRNA synthetase family. IleS type 1 subfamily.</text>
</comment>
<protein>
    <recommendedName>
        <fullName evidence="1">Isoleucine--tRNA ligase</fullName>
        <ecNumber evidence="1">6.1.1.5</ecNumber>
    </recommendedName>
    <alternativeName>
        <fullName evidence="1">Isoleucyl-tRNA synthetase</fullName>
        <shortName evidence="1">IleRS</shortName>
    </alternativeName>
</protein>
<sequence length="936" mass="106126">MTDYKDTLNLPQTDFPMRANLPEREPQTLARWQTLDLYRKIRKDREGQPKFILHDGPPYANGRAHLGTAFNKTLKDIVVKSKTLSGFDAPFVPGWDCHGLPIELNVEKKLGKDKLSANAFRQACRDYAFSQIELQRDDFQRLGVLGDWQHPYLTMDFGYEADTVRALAKIVANGHLLRGQKPVHWCAACGSALAEAEVEYRDKASPAVDVGFEAVDAEAVRQRFGVKNATTRVLVPIWTTTPWTLPANEAVSVHPELHYALVKSELQNQPVYLILAKDLVDSAMQRYGVDDYEVHGNLKGDALEGMQLQHPFLDRIVPIILGEHVTTEAGTGNVHTAPAHGLEDYFVAEKYNLPINNPVDARGRFIPDTFLVGGQPVFKANEPIIVLLADSGHLLHSETIQHSYPHCWRHKTPLIFRATPQWFIGMNKNGLRERALAEIEKVTWLPAWGEARIGKMVADRPDWCISRQRLWGIPIPLFIHKKSGELHPKSPALMEKVAQLIEKESVDAWFDLDPKVLLGDDADHYEKVTDVLDVWFDSGVTHFCVLEKRRELKVPADIYLEGSDQHRGWFQSSLLTSLAIRDKAPYKSVLTYGFVVDSQGRKMSKSLGNVILPADVVKNLGADVLRLWAASMDYTVEVNVSDEILKRASDAYRRIRNTARFLLSNLYDFDPKKDKVAVDQLVALDRWAIFTTQKLQEKIITAYDRYRFPAIYQAIHNFCTVEMGSFYLDIIKDRLYTSKESGLPRRSAQTALYYIAEAFVRWIAPIISFTADEIWQFMPGDREPSVFLTQWFSDFPNAALSGEEEQRWQLLLQIRDEVNKALETYRNEGKIGSALTAEVVLYADERLNAAIATLGEELRFVLITSEASVLPFNEKSKAAFDTALPGLALEINVSEFEKCARCWQRRSSVGQIKEHADLCDRCVSNAFEDGDMRQFA</sequence>
<evidence type="ECO:0000255" key="1">
    <source>
        <dbReference type="HAMAP-Rule" id="MF_02002"/>
    </source>
</evidence>
<feature type="chain" id="PRO_1000189143" description="Isoleucine--tRNA ligase">
    <location>
        <begin position="1"/>
        <end position="936"/>
    </location>
</feature>
<feature type="short sequence motif" description="'HIGH' region">
    <location>
        <begin position="58"/>
        <end position="68"/>
    </location>
</feature>
<feature type="short sequence motif" description="'KMSKS' region">
    <location>
        <begin position="602"/>
        <end position="606"/>
    </location>
</feature>
<feature type="binding site" evidence="1">
    <location>
        <position position="561"/>
    </location>
    <ligand>
        <name>L-isoleucyl-5'-AMP</name>
        <dbReference type="ChEBI" id="CHEBI:178002"/>
    </ligand>
</feature>
<feature type="binding site" evidence="1">
    <location>
        <position position="605"/>
    </location>
    <ligand>
        <name>ATP</name>
        <dbReference type="ChEBI" id="CHEBI:30616"/>
    </ligand>
</feature>
<feature type="binding site" evidence="1">
    <location>
        <position position="899"/>
    </location>
    <ligand>
        <name>Zn(2+)</name>
        <dbReference type="ChEBI" id="CHEBI:29105"/>
    </ligand>
</feature>
<feature type="binding site" evidence="1">
    <location>
        <position position="902"/>
    </location>
    <ligand>
        <name>Zn(2+)</name>
        <dbReference type="ChEBI" id="CHEBI:29105"/>
    </ligand>
</feature>
<feature type="binding site" evidence="1">
    <location>
        <position position="919"/>
    </location>
    <ligand>
        <name>Zn(2+)</name>
        <dbReference type="ChEBI" id="CHEBI:29105"/>
    </ligand>
</feature>
<feature type="binding site" evidence="1">
    <location>
        <position position="922"/>
    </location>
    <ligand>
        <name>Zn(2+)</name>
        <dbReference type="ChEBI" id="CHEBI:29105"/>
    </ligand>
</feature>
<proteinExistence type="inferred from homology"/>
<gene>
    <name evidence="1" type="primary">ileS</name>
    <name type="ordered locus">CbuG_1612</name>
</gene>
<reference key="1">
    <citation type="journal article" date="2009" name="Infect. Immun.">
        <title>Comparative genomics reveal extensive transposon-mediated genomic plasticity and diversity among potential effector proteins within the genus Coxiella.</title>
        <authorList>
            <person name="Beare P.A."/>
            <person name="Unsworth N."/>
            <person name="Andoh M."/>
            <person name="Voth D.E."/>
            <person name="Omsland A."/>
            <person name="Gilk S.D."/>
            <person name="Williams K.P."/>
            <person name="Sobral B.W."/>
            <person name="Kupko J.J. III"/>
            <person name="Porcella S.F."/>
            <person name="Samuel J.E."/>
            <person name="Heinzen R.A."/>
        </authorList>
    </citation>
    <scope>NUCLEOTIDE SEQUENCE [LARGE SCALE GENOMIC DNA]</scope>
    <source>
        <strain>CbuG_Q212</strain>
    </source>
</reference>